<reference key="1">
    <citation type="journal article" date="2002" name="Mol. Microbiol.">
        <title>Genome sequence of Streptococcus agalactiae, a pathogen causing invasive neonatal disease.</title>
        <authorList>
            <person name="Glaser P."/>
            <person name="Rusniok C."/>
            <person name="Buchrieser C."/>
            <person name="Chevalier F."/>
            <person name="Frangeul L."/>
            <person name="Msadek T."/>
            <person name="Zouine M."/>
            <person name="Couve E."/>
            <person name="Lalioui L."/>
            <person name="Poyart C."/>
            <person name="Trieu-Cuot P."/>
            <person name="Kunst F."/>
        </authorList>
    </citation>
    <scope>NUCLEOTIDE SEQUENCE [LARGE SCALE GENOMIC DNA]</scope>
    <source>
        <strain>NEM316</strain>
    </source>
</reference>
<organism>
    <name type="scientific">Streptococcus agalactiae serotype III (strain NEM316)</name>
    <dbReference type="NCBI Taxonomy" id="211110"/>
    <lineage>
        <taxon>Bacteria</taxon>
        <taxon>Bacillati</taxon>
        <taxon>Bacillota</taxon>
        <taxon>Bacilli</taxon>
        <taxon>Lactobacillales</taxon>
        <taxon>Streptococcaceae</taxon>
        <taxon>Streptococcus</taxon>
    </lineage>
</organism>
<evidence type="ECO:0000255" key="1">
    <source>
        <dbReference type="HAMAP-Rule" id="MF_01556"/>
    </source>
</evidence>
<comment type="catalytic activity">
    <reaction evidence="1">
        <text>aldehydo-D-galactose 6-phosphate = keto-D-tagatose 6-phosphate</text>
        <dbReference type="Rhea" id="RHEA:13033"/>
        <dbReference type="ChEBI" id="CHEBI:58255"/>
        <dbReference type="ChEBI" id="CHEBI:134283"/>
        <dbReference type="EC" id="5.3.1.26"/>
    </reaction>
</comment>
<comment type="pathway">
    <text evidence="1">Carbohydrate metabolism; D-galactose 6-phosphate degradation; D-tagatose 6-phosphate from D-galactose 6-phosphate: step 1/1.</text>
</comment>
<comment type="subunit">
    <text evidence="1">Heteromultimeric protein consisting of LacA and LacB.</text>
</comment>
<comment type="similarity">
    <text evidence="1">Belongs to the LacAB/RpiB family.</text>
</comment>
<dbReference type="EC" id="5.3.1.26" evidence="1"/>
<dbReference type="EMBL" id="AL766854">
    <property type="protein sequence ID" value="CAD47576.1"/>
    <property type="molecule type" value="Genomic_DNA"/>
</dbReference>
<dbReference type="SMR" id="Q8E345"/>
<dbReference type="KEGG" id="san:gbs1917"/>
<dbReference type="eggNOG" id="COG0698">
    <property type="taxonomic scope" value="Bacteria"/>
</dbReference>
<dbReference type="HOGENOM" id="CLU_091396_2_0_9"/>
<dbReference type="UniPathway" id="UPA00702">
    <property type="reaction ID" value="UER00714"/>
</dbReference>
<dbReference type="Proteomes" id="UP000000823">
    <property type="component" value="Chromosome"/>
</dbReference>
<dbReference type="GO" id="GO:0050044">
    <property type="term" value="F:galactose-6-phosphate isomerase activity"/>
    <property type="evidence" value="ECO:0007669"/>
    <property type="project" value="UniProtKB-UniRule"/>
</dbReference>
<dbReference type="GO" id="GO:0004751">
    <property type="term" value="F:ribose-5-phosphate isomerase activity"/>
    <property type="evidence" value="ECO:0007669"/>
    <property type="project" value="TreeGrafter"/>
</dbReference>
<dbReference type="GO" id="GO:0019316">
    <property type="term" value="P:D-allose catabolic process"/>
    <property type="evidence" value="ECO:0007669"/>
    <property type="project" value="TreeGrafter"/>
</dbReference>
<dbReference type="GO" id="GO:0019388">
    <property type="term" value="P:galactose catabolic process"/>
    <property type="evidence" value="ECO:0007669"/>
    <property type="project" value="UniProtKB-UniPathway"/>
</dbReference>
<dbReference type="GO" id="GO:0019512">
    <property type="term" value="P:lactose catabolic process via tagatose-6-phosphate"/>
    <property type="evidence" value="ECO:0007669"/>
    <property type="project" value="UniProtKB-UniRule"/>
</dbReference>
<dbReference type="GO" id="GO:0009052">
    <property type="term" value="P:pentose-phosphate shunt, non-oxidative branch"/>
    <property type="evidence" value="ECO:0007669"/>
    <property type="project" value="TreeGrafter"/>
</dbReference>
<dbReference type="Gene3D" id="3.40.1400.10">
    <property type="entry name" value="Sugar-phosphate isomerase, RpiB/LacA/LacB"/>
    <property type="match status" value="1"/>
</dbReference>
<dbReference type="HAMAP" id="MF_01556">
    <property type="entry name" value="LacB"/>
    <property type="match status" value="1"/>
</dbReference>
<dbReference type="InterPro" id="IPR004784">
    <property type="entry name" value="LacB"/>
</dbReference>
<dbReference type="InterPro" id="IPR003500">
    <property type="entry name" value="RpiB_LacA_LacB"/>
</dbReference>
<dbReference type="InterPro" id="IPR036569">
    <property type="entry name" value="RpiB_LacA_LacB_sf"/>
</dbReference>
<dbReference type="NCBIfam" id="TIGR01119">
    <property type="entry name" value="lacB"/>
    <property type="match status" value="1"/>
</dbReference>
<dbReference type="NCBIfam" id="NF004051">
    <property type="entry name" value="PRK05571.1"/>
    <property type="match status" value="1"/>
</dbReference>
<dbReference type="NCBIfam" id="NF006381">
    <property type="entry name" value="PRK08622.1"/>
    <property type="match status" value="1"/>
</dbReference>
<dbReference type="NCBIfam" id="NF009258">
    <property type="entry name" value="PRK12615.1"/>
    <property type="match status" value="1"/>
</dbReference>
<dbReference type="NCBIfam" id="TIGR00689">
    <property type="entry name" value="rpiB_lacA_lacB"/>
    <property type="match status" value="1"/>
</dbReference>
<dbReference type="PANTHER" id="PTHR30345:SF0">
    <property type="entry name" value="DNA DAMAGE-REPAIR_TOLERATION PROTEIN DRT102"/>
    <property type="match status" value="1"/>
</dbReference>
<dbReference type="PANTHER" id="PTHR30345">
    <property type="entry name" value="RIBOSE-5-PHOSPHATE ISOMERASE B"/>
    <property type="match status" value="1"/>
</dbReference>
<dbReference type="Pfam" id="PF02502">
    <property type="entry name" value="LacAB_rpiB"/>
    <property type="match status" value="1"/>
</dbReference>
<dbReference type="PIRSF" id="PIRSF005384">
    <property type="entry name" value="RpiB_LacA_B"/>
    <property type="match status" value="1"/>
</dbReference>
<dbReference type="SUPFAM" id="SSF89623">
    <property type="entry name" value="Ribose/Galactose isomerase RpiB/AlsB"/>
    <property type="match status" value="1"/>
</dbReference>
<proteinExistence type="inferred from homology"/>
<gene>
    <name evidence="1" type="primary">lacB2</name>
    <name type="ordered locus">gbs1917</name>
</gene>
<protein>
    <recommendedName>
        <fullName evidence="1">Galactose-6-phosphate isomerase subunit LacB 2</fullName>
        <ecNumber evidence="1">5.3.1.26</ecNumber>
    </recommendedName>
</protein>
<accession>Q8E345</accession>
<name>LACB2_STRA3</name>
<sequence>MKIAVGCDHIVTYDKIAVVDYLKTKGYEVIDCGTYDNIRTHYPIYGKKVGEAVASGKADLGVCICGTGVGINNAVNKVPGIRSALVRDLTSAIYAKEELNANVIGFGGKITGGLLMTDIIEAFIRAKYKPTKENKVLIEKIAEVETHNAHQEENDFFTEFLDKWNRGEYHD</sequence>
<keyword id="KW-0413">Isomerase</keyword>
<keyword id="KW-0423">Lactose metabolism</keyword>
<feature type="chain" id="PRO_0000208148" description="Galactose-6-phosphate isomerase subunit LacB 2">
    <location>
        <begin position="1"/>
        <end position="171"/>
    </location>
</feature>